<sequence>MMTQWPSPAKLNLFLYITGQRADGYHTLQTLFQFVDYGDTISIEPRQDGEIHLLTPVDDVASEDNLIVRAARLLVQAAANSGRLPEHYGADIGVEKRLPMGGGLGGGSSNAATVLVALNHLWGCGFSQDELATLGLTLGADVPVFVRGHAAFAEGVGEILTPVDPPEKWYLIAHPGVSIPTPVIFNDPELPRNTPVRSIETLLKCEFGNDCEVIARKRFRKVDAALSWLLEYAPSRLTGTGSCVFAEFDTESAARQVLEQAPEWLHGFVARGMNTSPLQQTILAQTEFR</sequence>
<comment type="function">
    <text evidence="1">Catalyzes the phosphorylation of the position 2 hydroxy group of 4-diphosphocytidyl-2C-methyl-D-erythritol.</text>
</comment>
<comment type="catalytic activity">
    <reaction evidence="1">
        <text>4-CDP-2-C-methyl-D-erythritol + ATP = 4-CDP-2-C-methyl-D-erythritol 2-phosphate + ADP + H(+)</text>
        <dbReference type="Rhea" id="RHEA:18437"/>
        <dbReference type="ChEBI" id="CHEBI:15378"/>
        <dbReference type="ChEBI" id="CHEBI:30616"/>
        <dbReference type="ChEBI" id="CHEBI:57823"/>
        <dbReference type="ChEBI" id="CHEBI:57919"/>
        <dbReference type="ChEBI" id="CHEBI:456216"/>
        <dbReference type="EC" id="2.7.1.148"/>
    </reaction>
</comment>
<comment type="pathway">
    <text evidence="1">Isoprenoid biosynthesis; isopentenyl diphosphate biosynthesis via DXP pathway; isopentenyl diphosphate from 1-deoxy-D-xylulose 5-phosphate: step 3/6.</text>
</comment>
<comment type="subunit">
    <text evidence="1">Homodimer.</text>
</comment>
<comment type="similarity">
    <text evidence="1">Belongs to the GHMP kinase family. IspE subfamily.</text>
</comment>
<accession>A4WBC9</accession>
<organism>
    <name type="scientific">Enterobacter sp. (strain 638)</name>
    <dbReference type="NCBI Taxonomy" id="399742"/>
    <lineage>
        <taxon>Bacteria</taxon>
        <taxon>Pseudomonadati</taxon>
        <taxon>Pseudomonadota</taxon>
        <taxon>Gammaproteobacteria</taxon>
        <taxon>Enterobacterales</taxon>
        <taxon>Enterobacteriaceae</taxon>
        <taxon>Enterobacter</taxon>
    </lineage>
</organism>
<evidence type="ECO:0000255" key="1">
    <source>
        <dbReference type="HAMAP-Rule" id="MF_00061"/>
    </source>
</evidence>
<feature type="chain" id="PRO_1000057420" description="4-diphosphocytidyl-2-C-methyl-D-erythritol kinase">
    <location>
        <begin position="1"/>
        <end position="289"/>
    </location>
</feature>
<feature type="active site" evidence="1">
    <location>
        <position position="10"/>
    </location>
</feature>
<feature type="active site" evidence="1">
    <location>
        <position position="141"/>
    </location>
</feature>
<feature type="binding site" evidence="1">
    <location>
        <begin position="99"/>
        <end position="109"/>
    </location>
    <ligand>
        <name>ATP</name>
        <dbReference type="ChEBI" id="CHEBI:30616"/>
    </ligand>
</feature>
<gene>
    <name evidence="1" type="primary">ispE</name>
    <name type="ordered locus">Ent638_2340</name>
</gene>
<name>ISPE_ENT38</name>
<protein>
    <recommendedName>
        <fullName evidence="1">4-diphosphocytidyl-2-C-methyl-D-erythritol kinase</fullName>
        <shortName evidence="1">CMK</shortName>
        <ecNumber evidence="1">2.7.1.148</ecNumber>
    </recommendedName>
    <alternativeName>
        <fullName evidence="1">4-(cytidine-5'-diphospho)-2-C-methyl-D-erythritol kinase</fullName>
    </alternativeName>
</protein>
<keyword id="KW-0067">ATP-binding</keyword>
<keyword id="KW-0414">Isoprene biosynthesis</keyword>
<keyword id="KW-0418">Kinase</keyword>
<keyword id="KW-0547">Nucleotide-binding</keyword>
<keyword id="KW-0808">Transferase</keyword>
<dbReference type="EC" id="2.7.1.148" evidence="1"/>
<dbReference type="EMBL" id="CP000653">
    <property type="protein sequence ID" value="ABP61009.1"/>
    <property type="molecule type" value="Genomic_DNA"/>
</dbReference>
<dbReference type="RefSeq" id="WP_012017723.1">
    <property type="nucleotide sequence ID" value="NC_009436.1"/>
</dbReference>
<dbReference type="SMR" id="A4WBC9"/>
<dbReference type="STRING" id="399742.Ent638_2340"/>
<dbReference type="KEGG" id="ent:Ent638_2340"/>
<dbReference type="eggNOG" id="COG1947">
    <property type="taxonomic scope" value="Bacteria"/>
</dbReference>
<dbReference type="HOGENOM" id="CLU_053057_3_0_6"/>
<dbReference type="OrthoDB" id="9809438at2"/>
<dbReference type="UniPathway" id="UPA00056">
    <property type="reaction ID" value="UER00094"/>
</dbReference>
<dbReference type="Proteomes" id="UP000000230">
    <property type="component" value="Chromosome"/>
</dbReference>
<dbReference type="GO" id="GO:0050515">
    <property type="term" value="F:4-(cytidine 5'-diphospho)-2-C-methyl-D-erythritol kinase activity"/>
    <property type="evidence" value="ECO:0007669"/>
    <property type="project" value="UniProtKB-UniRule"/>
</dbReference>
<dbReference type="GO" id="GO:0005524">
    <property type="term" value="F:ATP binding"/>
    <property type="evidence" value="ECO:0007669"/>
    <property type="project" value="UniProtKB-UniRule"/>
</dbReference>
<dbReference type="GO" id="GO:0019288">
    <property type="term" value="P:isopentenyl diphosphate biosynthetic process, methylerythritol 4-phosphate pathway"/>
    <property type="evidence" value="ECO:0007669"/>
    <property type="project" value="UniProtKB-UniRule"/>
</dbReference>
<dbReference type="GO" id="GO:0016114">
    <property type="term" value="P:terpenoid biosynthetic process"/>
    <property type="evidence" value="ECO:0007669"/>
    <property type="project" value="InterPro"/>
</dbReference>
<dbReference type="FunFam" id="3.30.230.10:FF:000022">
    <property type="entry name" value="4-diphosphocytidyl-2-C-methyl-D-erythritol kinase"/>
    <property type="match status" value="1"/>
</dbReference>
<dbReference type="FunFam" id="3.30.70.890:FF:000004">
    <property type="entry name" value="4-diphosphocytidyl-2-C-methyl-D-erythritol kinase"/>
    <property type="match status" value="1"/>
</dbReference>
<dbReference type="Gene3D" id="3.30.230.10">
    <property type="match status" value="1"/>
</dbReference>
<dbReference type="Gene3D" id="3.30.70.890">
    <property type="entry name" value="GHMP kinase, C-terminal domain"/>
    <property type="match status" value="1"/>
</dbReference>
<dbReference type="HAMAP" id="MF_00061">
    <property type="entry name" value="IspE"/>
    <property type="match status" value="1"/>
</dbReference>
<dbReference type="InterPro" id="IPR013750">
    <property type="entry name" value="GHMP_kinase_C_dom"/>
</dbReference>
<dbReference type="InterPro" id="IPR036554">
    <property type="entry name" value="GHMP_kinase_C_sf"/>
</dbReference>
<dbReference type="InterPro" id="IPR006204">
    <property type="entry name" value="GHMP_kinase_N_dom"/>
</dbReference>
<dbReference type="InterPro" id="IPR004424">
    <property type="entry name" value="IspE"/>
</dbReference>
<dbReference type="InterPro" id="IPR020568">
    <property type="entry name" value="Ribosomal_Su5_D2-typ_SF"/>
</dbReference>
<dbReference type="InterPro" id="IPR014721">
    <property type="entry name" value="Ribsml_uS5_D2-typ_fold_subgr"/>
</dbReference>
<dbReference type="NCBIfam" id="TIGR00154">
    <property type="entry name" value="ispE"/>
    <property type="match status" value="1"/>
</dbReference>
<dbReference type="PANTHER" id="PTHR43527">
    <property type="entry name" value="4-DIPHOSPHOCYTIDYL-2-C-METHYL-D-ERYTHRITOL KINASE, CHLOROPLASTIC"/>
    <property type="match status" value="1"/>
</dbReference>
<dbReference type="PANTHER" id="PTHR43527:SF2">
    <property type="entry name" value="4-DIPHOSPHOCYTIDYL-2-C-METHYL-D-ERYTHRITOL KINASE, CHLOROPLASTIC"/>
    <property type="match status" value="1"/>
</dbReference>
<dbReference type="Pfam" id="PF08544">
    <property type="entry name" value="GHMP_kinases_C"/>
    <property type="match status" value="1"/>
</dbReference>
<dbReference type="Pfam" id="PF00288">
    <property type="entry name" value="GHMP_kinases_N"/>
    <property type="match status" value="1"/>
</dbReference>
<dbReference type="PIRSF" id="PIRSF010376">
    <property type="entry name" value="IspE"/>
    <property type="match status" value="1"/>
</dbReference>
<dbReference type="SUPFAM" id="SSF55060">
    <property type="entry name" value="GHMP Kinase, C-terminal domain"/>
    <property type="match status" value="1"/>
</dbReference>
<dbReference type="SUPFAM" id="SSF54211">
    <property type="entry name" value="Ribosomal protein S5 domain 2-like"/>
    <property type="match status" value="1"/>
</dbReference>
<reference key="1">
    <citation type="journal article" date="2010" name="PLoS Genet.">
        <title>Genome sequence of the plant growth promoting endophytic bacterium Enterobacter sp. 638.</title>
        <authorList>
            <person name="Taghavi S."/>
            <person name="van der Lelie D."/>
            <person name="Hoffman A."/>
            <person name="Zhang Y.B."/>
            <person name="Walla M.D."/>
            <person name="Vangronsveld J."/>
            <person name="Newman L."/>
            <person name="Monchy S."/>
        </authorList>
    </citation>
    <scope>NUCLEOTIDE SEQUENCE [LARGE SCALE GENOMIC DNA]</scope>
    <source>
        <strain>638</strain>
    </source>
</reference>
<proteinExistence type="inferred from homology"/>